<accession>O94336</accession>
<protein>
    <recommendedName>
        <fullName>Uncharacterized FCP1 homology domain-containing protein C1271.03c</fullName>
    </recommendedName>
</protein>
<keyword id="KW-1185">Reference proteome</keyword>
<organism>
    <name type="scientific">Schizosaccharomyces pombe (strain 972 / ATCC 24843)</name>
    <name type="common">Fission yeast</name>
    <dbReference type="NCBI Taxonomy" id="284812"/>
    <lineage>
        <taxon>Eukaryota</taxon>
        <taxon>Fungi</taxon>
        <taxon>Dikarya</taxon>
        <taxon>Ascomycota</taxon>
        <taxon>Taphrinomycotina</taxon>
        <taxon>Schizosaccharomycetes</taxon>
        <taxon>Schizosaccharomycetales</taxon>
        <taxon>Schizosaccharomycetaceae</taxon>
        <taxon>Schizosaccharomyces</taxon>
    </lineage>
</organism>
<sequence>MAPEPSLTYLSQASSCNGATDNRKLVILDLNGTLLCRALAVRSEKSVYEASRNPIPRPGLHNFLKYIFANFSVMVFSSSKPHNVQAMLSAIMNEEQKKALIACWTRVDMKLTKHQFDRKVQTYKNLDTVWEKIHHDSTGKPVSWSQYNTIIVDDSKTKCAAHPYNHIAVSDFVAKSHSNIPKDIELACVIRYLKHLKSVPNVSYYIYKFPFKILADKSLEDNLKYLDELDENYKKECQVDNPQP</sequence>
<reference key="1">
    <citation type="journal article" date="2002" name="Nature">
        <title>The genome sequence of Schizosaccharomyces pombe.</title>
        <authorList>
            <person name="Wood V."/>
            <person name="Gwilliam R."/>
            <person name="Rajandream M.A."/>
            <person name="Lyne M.H."/>
            <person name="Lyne R."/>
            <person name="Stewart A."/>
            <person name="Sgouros J.G."/>
            <person name="Peat N."/>
            <person name="Hayles J."/>
            <person name="Baker S.G."/>
            <person name="Basham D."/>
            <person name="Bowman S."/>
            <person name="Brooks K."/>
            <person name="Brown D."/>
            <person name="Brown S."/>
            <person name="Chillingworth T."/>
            <person name="Churcher C.M."/>
            <person name="Collins M."/>
            <person name="Connor R."/>
            <person name="Cronin A."/>
            <person name="Davis P."/>
            <person name="Feltwell T."/>
            <person name="Fraser A."/>
            <person name="Gentles S."/>
            <person name="Goble A."/>
            <person name="Hamlin N."/>
            <person name="Harris D.E."/>
            <person name="Hidalgo J."/>
            <person name="Hodgson G."/>
            <person name="Holroyd S."/>
            <person name="Hornsby T."/>
            <person name="Howarth S."/>
            <person name="Huckle E.J."/>
            <person name="Hunt S."/>
            <person name="Jagels K."/>
            <person name="James K.D."/>
            <person name="Jones L."/>
            <person name="Jones M."/>
            <person name="Leather S."/>
            <person name="McDonald S."/>
            <person name="McLean J."/>
            <person name="Mooney P."/>
            <person name="Moule S."/>
            <person name="Mungall K.L."/>
            <person name="Murphy L.D."/>
            <person name="Niblett D."/>
            <person name="Odell C."/>
            <person name="Oliver K."/>
            <person name="O'Neil S."/>
            <person name="Pearson D."/>
            <person name="Quail M.A."/>
            <person name="Rabbinowitsch E."/>
            <person name="Rutherford K.M."/>
            <person name="Rutter S."/>
            <person name="Saunders D."/>
            <person name="Seeger K."/>
            <person name="Sharp S."/>
            <person name="Skelton J."/>
            <person name="Simmonds M.N."/>
            <person name="Squares R."/>
            <person name="Squares S."/>
            <person name="Stevens K."/>
            <person name="Taylor K."/>
            <person name="Taylor R.G."/>
            <person name="Tivey A."/>
            <person name="Walsh S.V."/>
            <person name="Warren T."/>
            <person name="Whitehead S."/>
            <person name="Woodward J.R."/>
            <person name="Volckaert G."/>
            <person name="Aert R."/>
            <person name="Robben J."/>
            <person name="Grymonprez B."/>
            <person name="Weltjens I."/>
            <person name="Vanstreels E."/>
            <person name="Rieger M."/>
            <person name="Schaefer M."/>
            <person name="Mueller-Auer S."/>
            <person name="Gabel C."/>
            <person name="Fuchs M."/>
            <person name="Duesterhoeft A."/>
            <person name="Fritzc C."/>
            <person name="Holzer E."/>
            <person name="Moestl D."/>
            <person name="Hilbert H."/>
            <person name="Borzym K."/>
            <person name="Langer I."/>
            <person name="Beck A."/>
            <person name="Lehrach H."/>
            <person name="Reinhardt R."/>
            <person name="Pohl T.M."/>
            <person name="Eger P."/>
            <person name="Zimmermann W."/>
            <person name="Wedler H."/>
            <person name="Wambutt R."/>
            <person name="Purnelle B."/>
            <person name="Goffeau A."/>
            <person name="Cadieu E."/>
            <person name="Dreano S."/>
            <person name="Gloux S."/>
            <person name="Lelaure V."/>
            <person name="Mottier S."/>
            <person name="Galibert F."/>
            <person name="Aves S.J."/>
            <person name="Xiang Z."/>
            <person name="Hunt C."/>
            <person name="Moore K."/>
            <person name="Hurst S.M."/>
            <person name="Lucas M."/>
            <person name="Rochet M."/>
            <person name="Gaillardin C."/>
            <person name="Tallada V.A."/>
            <person name="Garzon A."/>
            <person name="Thode G."/>
            <person name="Daga R.R."/>
            <person name="Cruzado L."/>
            <person name="Jimenez J."/>
            <person name="Sanchez M."/>
            <person name="del Rey F."/>
            <person name="Benito J."/>
            <person name="Dominguez A."/>
            <person name="Revuelta J.L."/>
            <person name="Moreno S."/>
            <person name="Armstrong J."/>
            <person name="Forsburg S.L."/>
            <person name="Cerutti L."/>
            <person name="Lowe T."/>
            <person name="McCombie W.R."/>
            <person name="Paulsen I."/>
            <person name="Potashkin J."/>
            <person name="Shpakovski G.V."/>
            <person name="Ussery D."/>
            <person name="Barrell B.G."/>
            <person name="Nurse P."/>
        </authorList>
    </citation>
    <scope>NUCLEOTIDE SEQUENCE [LARGE SCALE GENOMIC DNA]</scope>
    <source>
        <strain>972 / ATCC 24843</strain>
    </source>
</reference>
<feature type="chain" id="PRO_0000116776" description="Uncharacterized FCP1 homology domain-containing protein C1271.03c">
    <location>
        <begin position="1"/>
        <end position="244"/>
    </location>
</feature>
<feature type="domain" description="FCP1 homology" evidence="1">
    <location>
        <begin position="19"/>
        <end position="196"/>
    </location>
</feature>
<evidence type="ECO:0000255" key="1">
    <source>
        <dbReference type="PROSITE-ProRule" id="PRU00336"/>
    </source>
</evidence>
<proteinExistence type="predicted"/>
<gene>
    <name type="ORF">SPBC1271.03c</name>
</gene>
<name>YHM3_SCHPO</name>
<dbReference type="EMBL" id="CU329671">
    <property type="protein sequence ID" value="CAA22193.1"/>
    <property type="molecule type" value="Genomic_DNA"/>
</dbReference>
<dbReference type="PIR" id="T39339">
    <property type="entry name" value="T39339"/>
</dbReference>
<dbReference type="RefSeq" id="NP_595147.1">
    <property type="nucleotide sequence ID" value="NM_001021055.2"/>
</dbReference>
<dbReference type="SMR" id="O94336"/>
<dbReference type="BioGRID" id="277832">
    <property type="interactions" value="17"/>
</dbReference>
<dbReference type="STRING" id="284812.O94336"/>
<dbReference type="PaxDb" id="4896-SPBC1271.03c.1"/>
<dbReference type="EnsemblFungi" id="SPBC1271.03c.1">
    <property type="protein sequence ID" value="SPBC1271.03c.1:pep"/>
    <property type="gene ID" value="SPBC1271.03c"/>
</dbReference>
<dbReference type="KEGG" id="spo:2541320"/>
<dbReference type="PomBase" id="SPBC1271.03c"/>
<dbReference type="VEuPathDB" id="FungiDB:SPBC1271.03c"/>
<dbReference type="eggNOG" id="KOG1605">
    <property type="taxonomic scope" value="Eukaryota"/>
</dbReference>
<dbReference type="HOGENOM" id="CLU_018875_0_2_1"/>
<dbReference type="InParanoid" id="O94336"/>
<dbReference type="OMA" id="GGRWDQT"/>
<dbReference type="PhylomeDB" id="O94336"/>
<dbReference type="PRO" id="PR:O94336"/>
<dbReference type="Proteomes" id="UP000002485">
    <property type="component" value="Chromosome II"/>
</dbReference>
<dbReference type="GO" id="GO:0005829">
    <property type="term" value="C:cytosol"/>
    <property type="evidence" value="ECO:0007005"/>
    <property type="project" value="PomBase"/>
</dbReference>
<dbReference type="GO" id="GO:0005730">
    <property type="term" value="C:nucleolus"/>
    <property type="evidence" value="ECO:0007005"/>
    <property type="project" value="PomBase"/>
</dbReference>
<dbReference type="GO" id="GO:0005634">
    <property type="term" value="C:nucleus"/>
    <property type="evidence" value="ECO:0007005"/>
    <property type="project" value="PomBase"/>
</dbReference>
<dbReference type="GO" id="GO:0004721">
    <property type="term" value="F:phosphoprotein phosphatase activity"/>
    <property type="evidence" value="ECO:0000318"/>
    <property type="project" value="GO_Central"/>
</dbReference>
<dbReference type="GO" id="GO:0023052">
    <property type="term" value="P:signaling"/>
    <property type="evidence" value="ECO:0000303"/>
    <property type="project" value="PomBase"/>
</dbReference>
<dbReference type="Gene3D" id="3.40.50.1000">
    <property type="entry name" value="HAD superfamily/HAD-like"/>
    <property type="match status" value="1"/>
</dbReference>
<dbReference type="InterPro" id="IPR004274">
    <property type="entry name" value="FCP1_dom"/>
</dbReference>
<dbReference type="InterPro" id="IPR036412">
    <property type="entry name" value="HAD-like_sf"/>
</dbReference>
<dbReference type="InterPro" id="IPR023214">
    <property type="entry name" value="HAD_sf"/>
</dbReference>
<dbReference type="InterPro" id="IPR050365">
    <property type="entry name" value="TIM50"/>
</dbReference>
<dbReference type="PANTHER" id="PTHR12210">
    <property type="entry name" value="DULLARD PROTEIN PHOSPHATASE"/>
    <property type="match status" value="1"/>
</dbReference>
<dbReference type="Pfam" id="PF03031">
    <property type="entry name" value="NIF"/>
    <property type="match status" value="1"/>
</dbReference>
<dbReference type="SMART" id="SM00577">
    <property type="entry name" value="CPDc"/>
    <property type="match status" value="1"/>
</dbReference>
<dbReference type="SUPFAM" id="SSF56784">
    <property type="entry name" value="HAD-like"/>
    <property type="match status" value="1"/>
</dbReference>
<dbReference type="PROSITE" id="PS50969">
    <property type="entry name" value="FCP1"/>
    <property type="match status" value="1"/>
</dbReference>